<gene>
    <name type="primary">HBD</name>
</gene>
<keyword id="KW-0903">Direct protein sequencing</keyword>
<keyword id="KW-0349">Heme</keyword>
<keyword id="KW-0408">Iron</keyword>
<keyword id="KW-0479">Metal-binding</keyword>
<keyword id="KW-0561">Oxygen transport</keyword>
<keyword id="KW-0813">Transport</keyword>
<feature type="chain" id="PRO_0000053163" description="Hemoglobin subunit delta">
    <location>
        <begin position="1"/>
        <end position="146"/>
    </location>
</feature>
<feature type="domain" description="Globin" evidence="1">
    <location>
        <begin position="2"/>
        <end position="146"/>
    </location>
</feature>
<feature type="binding site" description="distal binding residue">
    <location>
        <position position="63"/>
    </location>
    <ligand>
        <name>heme b</name>
        <dbReference type="ChEBI" id="CHEBI:60344"/>
    </ligand>
    <ligandPart>
        <name>Fe</name>
        <dbReference type="ChEBI" id="CHEBI:18248"/>
    </ligandPart>
</feature>
<feature type="binding site" description="proximal binding residue">
    <location>
        <position position="92"/>
    </location>
    <ligand>
        <name>heme b</name>
        <dbReference type="ChEBI" id="CHEBI:60344"/>
    </ligand>
    <ligandPart>
        <name>Fe</name>
        <dbReference type="ChEBI" id="CHEBI:18248"/>
    </ligandPart>
</feature>
<feature type="sequence variant" description="In one allele.">
    <original>E</original>
    <variation>K</variation>
    <location>
        <position position="6"/>
    </location>
</feature>
<feature type="sequence variant" description="In one allele.">
    <original>S</original>
    <variation>A</variation>
    <location>
        <position position="9"/>
    </location>
</feature>
<feature type="sequence variant" description="In one allele.">
    <original>G</original>
    <variation>D</variation>
    <location>
        <position position="69"/>
    </location>
</feature>
<comment type="subunit">
    <text>Heterotetramer of two delta chains and two alpha chains.</text>
</comment>
<comment type="tissue specificity">
    <text>Red blood cells.</text>
</comment>
<comment type="similarity">
    <text evidence="1">Belongs to the globin family.</text>
</comment>
<proteinExistence type="evidence at protein level"/>
<organism>
    <name type="scientific">Ateles fusciceps</name>
    <name type="common">Brown-headed spider monkey</name>
    <name type="synonym">Ateles geoffroyi fusciceps</name>
    <dbReference type="NCBI Taxonomy" id="9508"/>
    <lineage>
        <taxon>Eukaryota</taxon>
        <taxon>Metazoa</taxon>
        <taxon>Chordata</taxon>
        <taxon>Craniata</taxon>
        <taxon>Vertebrata</taxon>
        <taxon>Euteleostomi</taxon>
        <taxon>Mammalia</taxon>
        <taxon>Eutheria</taxon>
        <taxon>Euarchontoglires</taxon>
        <taxon>Primates</taxon>
        <taxon>Haplorrhini</taxon>
        <taxon>Platyrrhini</taxon>
        <taxon>Atelidae</taxon>
        <taxon>Atelinae</taxon>
        <taxon>Ateles</taxon>
    </lineage>
</organism>
<evidence type="ECO:0000255" key="1">
    <source>
        <dbReference type="PROSITE-ProRule" id="PRU00238"/>
    </source>
</evidence>
<accession>P33499</accession>
<reference key="1">
    <citation type="journal article" date="1971" name="Biochem. Genet.">
        <title>Primate hemoglobins: some sequences and some proposals concerning the character of evolution and mutation.</title>
        <authorList>
            <person name="Boyer S.H."/>
            <person name="Crosby E.F."/>
            <person name="Noyes A.N."/>
            <person name="Fuller G.F."/>
            <person name="Leslie S.E."/>
            <person name="Donaldson L.J."/>
            <person name="Vrablik G.R."/>
            <person name="Schaefer E.W. Jr."/>
            <person name="Thurmon T.F."/>
        </authorList>
    </citation>
    <scope>PROTEIN SEQUENCE</scope>
</reference>
<protein>
    <recommendedName>
        <fullName>Hemoglobin subunit delta</fullName>
    </recommendedName>
    <alternativeName>
        <fullName>Delta-globin</fullName>
    </alternativeName>
    <alternativeName>
        <fullName>Hemoglobin delta chain</fullName>
    </alternativeName>
</protein>
<dbReference type="PIR" id="C02365">
    <property type="entry name" value="HDMKH"/>
</dbReference>
<dbReference type="SMR" id="P33499"/>
<dbReference type="GO" id="GO:0072562">
    <property type="term" value="C:blood microparticle"/>
    <property type="evidence" value="ECO:0007669"/>
    <property type="project" value="TreeGrafter"/>
</dbReference>
<dbReference type="GO" id="GO:0031838">
    <property type="term" value="C:haptoglobin-hemoglobin complex"/>
    <property type="evidence" value="ECO:0007669"/>
    <property type="project" value="TreeGrafter"/>
</dbReference>
<dbReference type="GO" id="GO:0005833">
    <property type="term" value="C:hemoglobin complex"/>
    <property type="evidence" value="ECO:0007669"/>
    <property type="project" value="InterPro"/>
</dbReference>
<dbReference type="GO" id="GO:0031720">
    <property type="term" value="F:haptoglobin binding"/>
    <property type="evidence" value="ECO:0007669"/>
    <property type="project" value="TreeGrafter"/>
</dbReference>
<dbReference type="GO" id="GO:0020037">
    <property type="term" value="F:heme binding"/>
    <property type="evidence" value="ECO:0007669"/>
    <property type="project" value="InterPro"/>
</dbReference>
<dbReference type="GO" id="GO:0031721">
    <property type="term" value="F:hemoglobin alpha binding"/>
    <property type="evidence" value="ECO:0007669"/>
    <property type="project" value="TreeGrafter"/>
</dbReference>
<dbReference type="GO" id="GO:0046872">
    <property type="term" value="F:metal ion binding"/>
    <property type="evidence" value="ECO:0007669"/>
    <property type="project" value="UniProtKB-KW"/>
</dbReference>
<dbReference type="GO" id="GO:0043177">
    <property type="term" value="F:organic acid binding"/>
    <property type="evidence" value="ECO:0007669"/>
    <property type="project" value="TreeGrafter"/>
</dbReference>
<dbReference type="GO" id="GO:0019825">
    <property type="term" value="F:oxygen binding"/>
    <property type="evidence" value="ECO:0007669"/>
    <property type="project" value="InterPro"/>
</dbReference>
<dbReference type="GO" id="GO:0005344">
    <property type="term" value="F:oxygen carrier activity"/>
    <property type="evidence" value="ECO:0007669"/>
    <property type="project" value="UniProtKB-KW"/>
</dbReference>
<dbReference type="GO" id="GO:0004601">
    <property type="term" value="F:peroxidase activity"/>
    <property type="evidence" value="ECO:0007669"/>
    <property type="project" value="TreeGrafter"/>
</dbReference>
<dbReference type="GO" id="GO:0042744">
    <property type="term" value="P:hydrogen peroxide catabolic process"/>
    <property type="evidence" value="ECO:0007669"/>
    <property type="project" value="TreeGrafter"/>
</dbReference>
<dbReference type="CDD" id="cd08925">
    <property type="entry name" value="Hb-beta-like"/>
    <property type="match status" value="1"/>
</dbReference>
<dbReference type="FunFam" id="1.10.490.10:FF:000001">
    <property type="entry name" value="Hemoglobin subunit beta"/>
    <property type="match status" value="1"/>
</dbReference>
<dbReference type="Gene3D" id="1.10.490.10">
    <property type="entry name" value="Globins"/>
    <property type="match status" value="1"/>
</dbReference>
<dbReference type="InterPro" id="IPR000971">
    <property type="entry name" value="Globin"/>
</dbReference>
<dbReference type="InterPro" id="IPR009050">
    <property type="entry name" value="Globin-like_sf"/>
</dbReference>
<dbReference type="InterPro" id="IPR012292">
    <property type="entry name" value="Globin/Proto"/>
</dbReference>
<dbReference type="InterPro" id="IPR002337">
    <property type="entry name" value="Hemoglobin_b"/>
</dbReference>
<dbReference type="InterPro" id="IPR050056">
    <property type="entry name" value="Hemoglobin_oxygen_transport"/>
</dbReference>
<dbReference type="PANTHER" id="PTHR11442">
    <property type="entry name" value="HEMOGLOBIN FAMILY MEMBER"/>
    <property type="match status" value="1"/>
</dbReference>
<dbReference type="PANTHER" id="PTHR11442:SF42">
    <property type="entry name" value="HEMOGLOBIN SUBUNIT BETA"/>
    <property type="match status" value="1"/>
</dbReference>
<dbReference type="Pfam" id="PF00042">
    <property type="entry name" value="Globin"/>
    <property type="match status" value="1"/>
</dbReference>
<dbReference type="PRINTS" id="PR00814">
    <property type="entry name" value="BETAHAEM"/>
</dbReference>
<dbReference type="SUPFAM" id="SSF46458">
    <property type="entry name" value="Globin-like"/>
    <property type="match status" value="1"/>
</dbReference>
<dbReference type="PROSITE" id="PS01033">
    <property type="entry name" value="GLOBIN"/>
    <property type="match status" value="1"/>
</dbReference>
<sequence>VHLTGEEKSAVAALWGKVNVDEVGGEALGRLLVVYPWTQRFFESFGALSTPDAVMGNPKVKAHGKKVLGAFSDGLAHLDNLKGTFAQLSELHCDKLHVDPENFRLLGNVLVCVLARNFGKEFTPQVQAAFQKVVAGVATALAHKYH</sequence>
<name>HBD_ATEFU</name>